<keyword id="KW-0472">Membrane</keyword>
<keyword id="KW-1185">Reference proteome</keyword>
<keyword id="KW-0812">Transmembrane</keyword>
<keyword id="KW-1133">Transmembrane helix</keyword>
<dbReference type="EMBL" id="AF303741">
    <property type="protein sequence ID" value="AAK82095.1"/>
    <property type="molecule type" value="Genomic_DNA"/>
</dbReference>
<dbReference type="RefSeq" id="NP_149697.1">
    <property type="nucleotide sequence ID" value="NC_003038.1"/>
</dbReference>
<dbReference type="KEGG" id="vg:1733137"/>
<dbReference type="OrthoDB" id="31831at10239"/>
<dbReference type="Proteomes" id="UP000001359">
    <property type="component" value="Genome"/>
</dbReference>
<dbReference type="GO" id="GO:0016020">
    <property type="term" value="C:membrane"/>
    <property type="evidence" value="ECO:0007669"/>
    <property type="project" value="UniProtKB-SubCell"/>
</dbReference>
<protein>
    <recommendedName>
        <fullName>Uncharacterized protein 234R</fullName>
    </recommendedName>
</protein>
<feature type="chain" id="PRO_0000377824" description="Uncharacterized protein 234R">
    <location>
        <begin position="1"/>
        <end position="193"/>
    </location>
</feature>
<feature type="transmembrane region" description="Helical" evidence="1">
    <location>
        <begin position="153"/>
        <end position="170"/>
    </location>
</feature>
<organism>
    <name type="scientific">Invertebrate iridescent virus 6</name>
    <name type="common">IIV-6</name>
    <name type="synonym">Chilo iridescent virus</name>
    <dbReference type="NCBI Taxonomy" id="176652"/>
    <lineage>
        <taxon>Viruses</taxon>
        <taxon>Varidnaviria</taxon>
        <taxon>Bamfordvirae</taxon>
        <taxon>Nucleocytoviricota</taxon>
        <taxon>Megaviricetes</taxon>
        <taxon>Pimascovirales</taxon>
        <taxon>Iridoviridae</taxon>
        <taxon>Betairidovirinae</taxon>
        <taxon>Iridovirus</taxon>
    </lineage>
</organism>
<proteinExistence type="predicted"/>
<comment type="subcellular location">
    <subcellularLocation>
        <location evidence="2">Membrane</location>
        <topology evidence="2">Single-pass membrane protein</topology>
    </subcellularLocation>
</comment>
<organismHost>
    <name type="scientific">Acheta domesticus</name>
    <name type="common">House cricket</name>
    <dbReference type="NCBI Taxonomy" id="6997"/>
</organismHost>
<organismHost>
    <name type="scientific">Chilo suppressalis</name>
    <name type="common">Asiatic rice borer moth</name>
    <dbReference type="NCBI Taxonomy" id="168631"/>
</organismHost>
<organismHost>
    <name type="scientific">Gryllus bimaculatus</name>
    <name type="common">Two-spotted cricket</name>
    <dbReference type="NCBI Taxonomy" id="6999"/>
</organismHost>
<organismHost>
    <name type="scientific">Gryllus campestris</name>
    <dbReference type="NCBI Taxonomy" id="58607"/>
</organismHost>
<organismHost>
    <name type="scientific">Spodoptera frugiperda</name>
    <name type="common">Fall armyworm</name>
    <dbReference type="NCBI Taxonomy" id="7108"/>
</organismHost>
<name>234R_IIV6</name>
<reference key="1">
    <citation type="journal article" date="2001" name="Virology">
        <title>Analysis of the first complete DNA sequence of an invertebrate iridovirus: coding strategy of the genome of Chilo iridescent virus.</title>
        <authorList>
            <person name="Jakob N.J."/>
            <person name="Mueller K."/>
            <person name="Bahr U."/>
            <person name="Darai G."/>
        </authorList>
    </citation>
    <scope>NUCLEOTIDE SEQUENCE [LARGE SCALE GENOMIC DNA]</scope>
</reference>
<reference key="2">
    <citation type="journal article" date="2007" name="Virol. J.">
        <title>Comparative genomic analysis of the family Iridoviridae: re-annotating and defining the core set of iridovirus genes.</title>
        <authorList>
            <person name="Eaton H.E."/>
            <person name="Metcalf J."/>
            <person name="Penny E."/>
            <person name="Tcherepanov V."/>
            <person name="Upton C."/>
            <person name="Brunetti C.R."/>
        </authorList>
    </citation>
    <scope>GENOME REANNOTATION</scope>
</reference>
<gene>
    <name type="ORF">IIV6-234R</name>
</gene>
<evidence type="ECO:0000255" key="1"/>
<evidence type="ECO:0000305" key="2"/>
<accession>Q91FT8</accession>
<sequence length="193" mass="21108">MNRSDKITLDQIKKLVPINADLINFAADVKVSAATDNPFLMAVVSQDMLESTTELPYKSIQKQVSLTVRNDNNVYQPYVLVLKSDFPQEAIVTINLQETPLVTASGCGRQTTIYPPALNGNGNGNGNGVVAPAYVSAVGGAPTDDTTQWYKDWRYWAVIALIAAVLIYLYMKSKKGSGEEQPVVIEMSRYSNA</sequence>